<reference key="1">
    <citation type="journal article" date="2010" name="Nature">
        <title>The sequence and de novo assembly of the giant panda genome.</title>
        <authorList>
            <person name="Li R."/>
            <person name="Fan W."/>
            <person name="Tian G."/>
            <person name="Zhu H."/>
            <person name="He L."/>
            <person name="Cai J."/>
            <person name="Huang Q."/>
            <person name="Cai Q."/>
            <person name="Li B."/>
            <person name="Bai Y."/>
            <person name="Zhang Z."/>
            <person name="Zhang Y."/>
            <person name="Wang W."/>
            <person name="Li J."/>
            <person name="Wei F."/>
            <person name="Li H."/>
            <person name="Jian M."/>
            <person name="Li J."/>
            <person name="Zhang Z."/>
            <person name="Nielsen R."/>
            <person name="Li D."/>
            <person name="Gu W."/>
            <person name="Yang Z."/>
            <person name="Xuan Z."/>
            <person name="Ryder O.A."/>
            <person name="Leung F.C."/>
            <person name="Zhou Y."/>
            <person name="Cao J."/>
            <person name="Sun X."/>
            <person name="Fu Y."/>
            <person name="Fang X."/>
            <person name="Guo X."/>
            <person name="Wang B."/>
            <person name="Hou R."/>
            <person name="Shen F."/>
            <person name="Mu B."/>
            <person name="Ni P."/>
            <person name="Lin R."/>
            <person name="Qian W."/>
            <person name="Wang G."/>
            <person name="Yu C."/>
            <person name="Nie W."/>
            <person name="Wang J."/>
            <person name="Wu Z."/>
            <person name="Liang H."/>
            <person name="Min J."/>
            <person name="Wu Q."/>
            <person name="Cheng S."/>
            <person name="Ruan J."/>
            <person name="Wang M."/>
            <person name="Shi Z."/>
            <person name="Wen M."/>
            <person name="Liu B."/>
            <person name="Ren X."/>
            <person name="Zheng H."/>
            <person name="Dong D."/>
            <person name="Cook K."/>
            <person name="Shan G."/>
            <person name="Zhang H."/>
            <person name="Kosiol C."/>
            <person name="Xie X."/>
            <person name="Lu Z."/>
            <person name="Zheng H."/>
            <person name="Li Y."/>
            <person name="Steiner C.C."/>
            <person name="Lam T.T."/>
            <person name="Lin S."/>
            <person name="Zhang Q."/>
            <person name="Li G."/>
            <person name="Tian J."/>
            <person name="Gong T."/>
            <person name="Liu H."/>
            <person name="Zhang D."/>
            <person name="Fang L."/>
            <person name="Ye C."/>
            <person name="Zhang J."/>
            <person name="Hu W."/>
            <person name="Xu A."/>
            <person name="Ren Y."/>
            <person name="Zhang G."/>
            <person name="Bruford M.W."/>
            <person name="Li Q."/>
            <person name="Ma L."/>
            <person name="Guo Y."/>
            <person name="An N."/>
            <person name="Hu Y."/>
            <person name="Zheng Y."/>
            <person name="Shi Y."/>
            <person name="Li Z."/>
            <person name="Liu Q."/>
            <person name="Chen Y."/>
            <person name="Zhao J."/>
            <person name="Qu N."/>
            <person name="Zhao S."/>
            <person name="Tian F."/>
            <person name="Wang X."/>
            <person name="Wang H."/>
            <person name="Xu L."/>
            <person name="Liu X."/>
            <person name="Vinar T."/>
            <person name="Wang Y."/>
            <person name="Lam T.W."/>
            <person name="Yiu S.M."/>
            <person name="Liu S."/>
            <person name="Zhang H."/>
            <person name="Li D."/>
            <person name="Huang Y."/>
            <person name="Wang X."/>
            <person name="Yang G."/>
            <person name="Jiang Z."/>
            <person name="Wang J."/>
            <person name="Qin N."/>
            <person name="Li L."/>
            <person name="Li J."/>
            <person name="Bolund L."/>
            <person name="Kristiansen K."/>
            <person name="Wong G.K."/>
            <person name="Olson M."/>
            <person name="Zhang X."/>
            <person name="Li S."/>
            <person name="Yang H."/>
            <person name="Wang J."/>
            <person name="Wang J."/>
        </authorList>
    </citation>
    <scope>NUCLEOTIDE SEQUENCE [LARGE SCALE GENOMIC DNA]</scope>
</reference>
<protein>
    <recommendedName>
        <fullName>Serine/threonine-protein kinase DCLK2</fullName>
        <ecNumber>2.7.11.1</ecNumber>
    </recommendedName>
    <alternativeName>
        <fullName>CaMK-like CREB regulatory kinase 2</fullName>
        <shortName>CL2</shortName>
        <shortName>CLICK-II</shortName>
        <shortName>CLICK2</shortName>
    </alternativeName>
    <alternativeName>
        <fullName>Doublecortin-like and CAM kinase-like 2</fullName>
    </alternativeName>
    <alternativeName>
        <fullName>Doublecortin-like kinase 2</fullName>
    </alternativeName>
</protein>
<evidence type="ECO:0000250" key="1"/>
<evidence type="ECO:0000250" key="2">
    <source>
        <dbReference type="UniProtKB" id="Q5MPA9"/>
    </source>
</evidence>
<evidence type="ECO:0000250" key="3">
    <source>
        <dbReference type="UniProtKB" id="Q8N568"/>
    </source>
</evidence>
<evidence type="ECO:0000255" key="4">
    <source>
        <dbReference type="PROSITE-ProRule" id="PRU00072"/>
    </source>
</evidence>
<evidence type="ECO:0000255" key="5">
    <source>
        <dbReference type="PROSITE-ProRule" id="PRU00159"/>
    </source>
</evidence>
<evidence type="ECO:0000255" key="6">
    <source>
        <dbReference type="PROSITE-ProRule" id="PRU10027"/>
    </source>
</evidence>
<evidence type="ECO:0000256" key="7">
    <source>
        <dbReference type="SAM" id="MobiDB-lite"/>
    </source>
</evidence>
<evidence type="ECO:0000305" key="8"/>
<keyword id="KW-0067">ATP-binding</keyword>
<keyword id="KW-0963">Cytoplasm</keyword>
<keyword id="KW-0206">Cytoskeleton</keyword>
<keyword id="KW-0418">Kinase</keyword>
<keyword id="KW-0547">Nucleotide-binding</keyword>
<keyword id="KW-0597">Phosphoprotein</keyword>
<keyword id="KW-1185">Reference proteome</keyword>
<keyword id="KW-0677">Repeat</keyword>
<keyword id="KW-0723">Serine/threonine-protein kinase</keyword>
<keyword id="KW-0808">Transferase</keyword>
<organism>
    <name type="scientific">Ailuropoda melanoleuca</name>
    <name type="common">Giant panda</name>
    <dbReference type="NCBI Taxonomy" id="9646"/>
    <lineage>
        <taxon>Eukaryota</taxon>
        <taxon>Metazoa</taxon>
        <taxon>Chordata</taxon>
        <taxon>Craniata</taxon>
        <taxon>Vertebrata</taxon>
        <taxon>Euteleostomi</taxon>
        <taxon>Mammalia</taxon>
        <taxon>Eutheria</taxon>
        <taxon>Laurasiatheria</taxon>
        <taxon>Carnivora</taxon>
        <taxon>Caniformia</taxon>
        <taxon>Ursidae</taxon>
        <taxon>Ailuropoda</taxon>
    </lineage>
</organism>
<dbReference type="EC" id="2.7.11.1"/>
<dbReference type="EMBL" id="GL194290">
    <property type="protein sequence ID" value="EFB15487.1"/>
    <property type="molecule type" value="Genomic_DNA"/>
</dbReference>
<dbReference type="RefSeq" id="XP_011236055.1">
    <property type="nucleotide sequence ID" value="XM_011237753.3"/>
</dbReference>
<dbReference type="RefSeq" id="XP_034517428.1">
    <property type="nucleotide sequence ID" value="XM_034661537.1"/>
</dbReference>
<dbReference type="SMR" id="D2I3C6"/>
<dbReference type="STRING" id="9646.ENSAMEP00000009704"/>
<dbReference type="Ensembl" id="ENSAMET00000010124.2">
    <property type="protein sequence ID" value="ENSAMEP00000009704.1"/>
    <property type="gene ID" value="ENSAMEG00000009231.2"/>
</dbReference>
<dbReference type="Ensembl" id="ENSAMET00000042834.1">
    <property type="protein sequence ID" value="ENSAMEP00000039822.1"/>
    <property type="gene ID" value="ENSAMEG00000009231.2"/>
</dbReference>
<dbReference type="GeneID" id="100474420"/>
<dbReference type="KEGG" id="aml:100474420"/>
<dbReference type="CTD" id="166614"/>
<dbReference type="eggNOG" id="KOG0032">
    <property type="taxonomic scope" value="Eukaryota"/>
</dbReference>
<dbReference type="GeneTree" id="ENSGT00940000154895"/>
<dbReference type="InParanoid" id="D2I3C6"/>
<dbReference type="OMA" id="LMTECKV"/>
<dbReference type="OrthoDB" id="1738954at2759"/>
<dbReference type="TreeFam" id="TF318770"/>
<dbReference type="Proteomes" id="UP000008912">
    <property type="component" value="Unassembled WGS sequence"/>
</dbReference>
<dbReference type="GO" id="GO:0005737">
    <property type="term" value="C:cytoplasm"/>
    <property type="evidence" value="ECO:0007669"/>
    <property type="project" value="UniProtKB-KW"/>
</dbReference>
<dbReference type="GO" id="GO:0005856">
    <property type="term" value="C:cytoskeleton"/>
    <property type="evidence" value="ECO:0007669"/>
    <property type="project" value="UniProtKB-SubCell"/>
</dbReference>
<dbReference type="GO" id="GO:0005524">
    <property type="term" value="F:ATP binding"/>
    <property type="evidence" value="ECO:0007669"/>
    <property type="project" value="UniProtKB-KW"/>
</dbReference>
<dbReference type="GO" id="GO:0106310">
    <property type="term" value="F:protein serine kinase activity"/>
    <property type="evidence" value="ECO:0007669"/>
    <property type="project" value="RHEA"/>
</dbReference>
<dbReference type="GO" id="GO:0004674">
    <property type="term" value="F:protein serine/threonine kinase activity"/>
    <property type="evidence" value="ECO:0007669"/>
    <property type="project" value="UniProtKB-KW"/>
</dbReference>
<dbReference type="GO" id="GO:0035556">
    <property type="term" value="P:intracellular signal transduction"/>
    <property type="evidence" value="ECO:0007669"/>
    <property type="project" value="InterPro"/>
</dbReference>
<dbReference type="CDD" id="cd17141">
    <property type="entry name" value="DCX1_DCLK2"/>
    <property type="match status" value="1"/>
</dbReference>
<dbReference type="CDD" id="cd17069">
    <property type="entry name" value="DCX2"/>
    <property type="match status" value="1"/>
</dbReference>
<dbReference type="CDD" id="cd14184">
    <property type="entry name" value="STKc_DCKL2"/>
    <property type="match status" value="1"/>
</dbReference>
<dbReference type="FunFam" id="1.10.510.10:FF:000066">
    <property type="entry name" value="Serine/threonine-protein kinase DCLK1 isoform 2"/>
    <property type="match status" value="1"/>
</dbReference>
<dbReference type="FunFam" id="3.30.200.20:FF:000057">
    <property type="entry name" value="Serine/threonine-protein kinase DCLK1 isoform 2"/>
    <property type="match status" value="1"/>
</dbReference>
<dbReference type="FunFam" id="3.10.20.230:FF:000001">
    <property type="entry name" value="serine/threonine-protein kinase DCLK1 isoform X1"/>
    <property type="match status" value="1"/>
</dbReference>
<dbReference type="FunFam" id="3.10.20.230:FF:000002">
    <property type="entry name" value="serine/threonine-protein kinase DCLK2 isoform X1"/>
    <property type="match status" value="1"/>
</dbReference>
<dbReference type="Gene3D" id="3.10.20.230">
    <property type="entry name" value="Doublecortin domain"/>
    <property type="match status" value="2"/>
</dbReference>
<dbReference type="Gene3D" id="3.30.200.20">
    <property type="entry name" value="Phosphorylase Kinase, domain 1"/>
    <property type="match status" value="1"/>
</dbReference>
<dbReference type="Gene3D" id="1.10.510.10">
    <property type="entry name" value="Transferase(Phosphotransferase) domain 1"/>
    <property type="match status" value="1"/>
</dbReference>
<dbReference type="InterPro" id="IPR003533">
    <property type="entry name" value="Doublecortin_dom"/>
</dbReference>
<dbReference type="InterPro" id="IPR036572">
    <property type="entry name" value="Doublecortin_dom_sf"/>
</dbReference>
<dbReference type="InterPro" id="IPR011009">
    <property type="entry name" value="Kinase-like_dom_sf"/>
</dbReference>
<dbReference type="InterPro" id="IPR000719">
    <property type="entry name" value="Prot_kinase_dom"/>
</dbReference>
<dbReference type="InterPro" id="IPR017441">
    <property type="entry name" value="Protein_kinase_ATP_BS"/>
</dbReference>
<dbReference type="InterPro" id="IPR008271">
    <property type="entry name" value="Ser/Thr_kinase_AS"/>
</dbReference>
<dbReference type="PANTHER" id="PTHR24347">
    <property type="entry name" value="SERINE/THREONINE-PROTEIN KINASE"/>
    <property type="match status" value="1"/>
</dbReference>
<dbReference type="Pfam" id="PF03607">
    <property type="entry name" value="DCX"/>
    <property type="match status" value="2"/>
</dbReference>
<dbReference type="Pfam" id="PF00069">
    <property type="entry name" value="Pkinase"/>
    <property type="match status" value="1"/>
</dbReference>
<dbReference type="SMART" id="SM00537">
    <property type="entry name" value="DCX"/>
    <property type="match status" value="2"/>
</dbReference>
<dbReference type="SMART" id="SM00220">
    <property type="entry name" value="S_TKc"/>
    <property type="match status" value="1"/>
</dbReference>
<dbReference type="SUPFAM" id="SSF89837">
    <property type="entry name" value="Doublecortin (DC)"/>
    <property type="match status" value="2"/>
</dbReference>
<dbReference type="SUPFAM" id="SSF56112">
    <property type="entry name" value="Protein kinase-like (PK-like)"/>
    <property type="match status" value="1"/>
</dbReference>
<dbReference type="PROSITE" id="PS50309">
    <property type="entry name" value="DC"/>
    <property type="match status" value="2"/>
</dbReference>
<dbReference type="PROSITE" id="PS00107">
    <property type="entry name" value="PROTEIN_KINASE_ATP"/>
    <property type="match status" value="1"/>
</dbReference>
<dbReference type="PROSITE" id="PS50011">
    <property type="entry name" value="PROTEIN_KINASE_DOM"/>
    <property type="match status" value="1"/>
</dbReference>
<dbReference type="PROSITE" id="PS00108">
    <property type="entry name" value="PROTEIN_KINASE_ST"/>
    <property type="match status" value="1"/>
</dbReference>
<proteinExistence type="inferred from homology"/>
<comment type="function">
    <text evidence="1">Protein kinase with a significantly reduced Ca(2+)/CAM affinity and dependence compared to other members of the CaMK family. May play a role in the down-regulation of CRE-dependent gene activation probably by phosphorylation of the CREB coactivator CRTC2/TORC2 and the resulting retention of TORC2 in the cytoplasm (By similarity).</text>
</comment>
<comment type="catalytic activity">
    <reaction>
        <text>L-seryl-[protein] + ATP = O-phospho-L-seryl-[protein] + ADP + H(+)</text>
        <dbReference type="Rhea" id="RHEA:17989"/>
        <dbReference type="Rhea" id="RHEA-COMP:9863"/>
        <dbReference type="Rhea" id="RHEA-COMP:11604"/>
        <dbReference type="ChEBI" id="CHEBI:15378"/>
        <dbReference type="ChEBI" id="CHEBI:29999"/>
        <dbReference type="ChEBI" id="CHEBI:30616"/>
        <dbReference type="ChEBI" id="CHEBI:83421"/>
        <dbReference type="ChEBI" id="CHEBI:456216"/>
        <dbReference type="EC" id="2.7.11.1"/>
    </reaction>
</comment>
<comment type="catalytic activity">
    <reaction>
        <text>L-threonyl-[protein] + ATP = O-phospho-L-threonyl-[protein] + ADP + H(+)</text>
        <dbReference type="Rhea" id="RHEA:46608"/>
        <dbReference type="Rhea" id="RHEA-COMP:11060"/>
        <dbReference type="Rhea" id="RHEA-COMP:11605"/>
        <dbReference type="ChEBI" id="CHEBI:15378"/>
        <dbReference type="ChEBI" id="CHEBI:30013"/>
        <dbReference type="ChEBI" id="CHEBI:30616"/>
        <dbReference type="ChEBI" id="CHEBI:61977"/>
        <dbReference type="ChEBI" id="CHEBI:456216"/>
        <dbReference type="EC" id="2.7.11.1"/>
    </reaction>
</comment>
<comment type="subunit">
    <text evidence="1">Binds to and stabilizes microtubules. Interacts with MAPK8IP1/JIP-1, MAPK8IP2/JIP-2, MAPK9/JNK2, PPP1R9B/NEURABIN-2 and actin.</text>
</comment>
<comment type="subcellular location">
    <subcellularLocation>
        <location>Cytoplasm</location>
        <location>Cytoskeleton</location>
    </subcellularLocation>
    <text evidence="1">Colocalizes with microtubules.</text>
</comment>
<comment type="domain">
    <text evidence="1">The doublecortin domains are involved in the colocalization with microtubules.</text>
</comment>
<comment type="PTM">
    <text evidence="1">Autophosphorylated.</text>
</comment>
<comment type="similarity">
    <text evidence="8">Belongs to the protein kinase superfamily. CAMK Ser/Thr protein kinase family. CaMK subfamily.</text>
</comment>
<sequence>MASTRSIELEHFEERDKRPRPGSRRGAPSSSGGSSSSGPKGNGLIPSPAHSAHCSFYRTRTLQALSSEKKAKKARFYRNGDRYFKGLVFAISSDRFRSFDALLMELTRSLSDNVNLPQGVRTIYTIDGSRKVTSLDELLEGESYVCASNEPFRKVDYTKNINPNWSVNIKGGTARALAAPSSVKSEVKESKDFIKPKLVTVIRSGVKPRKAVRILLNKKTAHSFEQVLTDITEAIKLDSGVVKRLCTLDGKQVTCLQDFFGDDDVFIACGPEKFRYAQDDFVLDHSECRVLKSSYSRSSAVKYSGSKSPGPSRRSKSPASVKRGGHHASAYSAARSPVNGTPSSQLSTPKSTKSSSSSPTSPGSFRGLKQISAHGRSSSNVNGGPELARCLSPEGVNGNRCSESSTLLEKYKIGKVIGDGNFAVVKECMDRSTGKEFALKIIDKAKCCGKEHLIENEVSILRRVKHPNIIMLVEEMETATELFLVMELVKGGDLFDAITSSTKYTERDGSAMVYNLANALRYLHGLSIVHRDIKPENLLVCEYPDGTKSLKLGDFGLATVVEGPLYTVCGTPTYVAPEIIAETGYGLKVDIWAAGVITYILLCGFPPFRSENNLQEDLFDQILAGKLEFPAPYWDNITDSAKELISQMLQVNVEARCTAGEILSHPWVSDDASQENNMQAEVTGKLKQHFNNALPKQNSTTTGVSVIMNTALDKEGQIFCSKHCQDSSRPGMELTSPVPPSASAEEPPVSAPAAAPAPLESPTPPGTPAASGCERAGTWRRHRD</sequence>
<name>DCLK2_AILME</name>
<accession>D2I3C6</accession>
<feature type="chain" id="PRO_0000393223" description="Serine/threonine-protein kinase DCLK2">
    <location>
        <begin position="1"/>
        <end position="784"/>
    </location>
</feature>
<feature type="domain" description="Doublecortin 1" evidence="4">
    <location>
        <begin position="72"/>
        <end position="158"/>
    </location>
</feature>
<feature type="domain" description="Doublecortin 2" evidence="4">
    <location>
        <begin position="197"/>
        <end position="280"/>
    </location>
</feature>
<feature type="domain" description="Protein kinase" evidence="5">
    <location>
        <begin position="411"/>
        <end position="668"/>
    </location>
</feature>
<feature type="region of interest" description="Disordered" evidence="7">
    <location>
        <begin position="1"/>
        <end position="45"/>
    </location>
</feature>
<feature type="region of interest" description="Disordered" evidence="7">
    <location>
        <begin position="300"/>
        <end position="368"/>
    </location>
</feature>
<feature type="region of interest" description="Disordered" evidence="7">
    <location>
        <begin position="724"/>
        <end position="784"/>
    </location>
</feature>
<feature type="compositionally biased region" description="Basic and acidic residues" evidence="7">
    <location>
        <begin position="7"/>
        <end position="19"/>
    </location>
</feature>
<feature type="compositionally biased region" description="Low complexity" evidence="7">
    <location>
        <begin position="24"/>
        <end position="39"/>
    </location>
</feature>
<feature type="compositionally biased region" description="Low complexity" evidence="7">
    <location>
        <begin position="300"/>
        <end position="312"/>
    </location>
</feature>
<feature type="compositionally biased region" description="Low complexity" evidence="7">
    <location>
        <begin position="341"/>
        <end position="364"/>
    </location>
</feature>
<feature type="compositionally biased region" description="Low complexity" evidence="7">
    <location>
        <begin position="741"/>
        <end position="758"/>
    </location>
</feature>
<feature type="active site" description="Proton acceptor" evidence="5 6">
    <location>
        <position position="532"/>
    </location>
</feature>
<feature type="binding site" evidence="5">
    <location>
        <begin position="417"/>
        <end position="425"/>
    </location>
    <ligand>
        <name>ATP</name>
        <dbReference type="ChEBI" id="CHEBI:30616"/>
    </ligand>
</feature>
<feature type="binding site" evidence="5">
    <location>
        <position position="440"/>
    </location>
    <ligand>
        <name>ATP</name>
        <dbReference type="ChEBI" id="CHEBI:30616"/>
    </ligand>
</feature>
<feature type="modified residue" description="Phosphothreonine" evidence="3">
    <location>
        <position position="61"/>
    </location>
</feature>
<feature type="modified residue" description="Phosphoserine" evidence="3">
    <location>
        <position position="379"/>
    </location>
</feature>
<feature type="modified residue" description="Phosphoserine" evidence="2">
    <location>
        <position position="664"/>
    </location>
</feature>
<feature type="modified residue" description="Phosphothreonine" evidence="2">
    <location>
        <position position="683"/>
    </location>
</feature>
<gene>
    <name type="primary">DCLK2</name>
    <name type="synonym">DCAMKL2</name>
    <name type="synonym">DCK2</name>
    <name type="ORF">PANDA_020009</name>
</gene>